<evidence type="ECO:0000255" key="1">
    <source>
        <dbReference type="HAMAP-Rule" id="MF_00276"/>
    </source>
</evidence>
<dbReference type="EMBL" id="CP000685">
    <property type="protein sequence ID" value="ABQ05005.1"/>
    <property type="molecule type" value="Genomic_DNA"/>
</dbReference>
<dbReference type="RefSeq" id="WP_012024045.1">
    <property type="nucleotide sequence ID" value="NC_009441.1"/>
</dbReference>
<dbReference type="SMR" id="A5FIF7"/>
<dbReference type="STRING" id="376686.Fjoh_1973"/>
<dbReference type="KEGG" id="fjo:Fjoh_1973"/>
<dbReference type="eggNOG" id="COG2156">
    <property type="taxonomic scope" value="Bacteria"/>
</dbReference>
<dbReference type="HOGENOM" id="CLU_077094_1_0_10"/>
<dbReference type="OrthoDB" id="9809491at2"/>
<dbReference type="Proteomes" id="UP000006694">
    <property type="component" value="Chromosome"/>
</dbReference>
<dbReference type="GO" id="GO:0005886">
    <property type="term" value="C:plasma membrane"/>
    <property type="evidence" value="ECO:0007669"/>
    <property type="project" value="UniProtKB-SubCell"/>
</dbReference>
<dbReference type="GO" id="GO:0005524">
    <property type="term" value="F:ATP binding"/>
    <property type="evidence" value="ECO:0007669"/>
    <property type="project" value="UniProtKB-UniRule"/>
</dbReference>
<dbReference type="GO" id="GO:0008556">
    <property type="term" value="F:P-type potassium transmembrane transporter activity"/>
    <property type="evidence" value="ECO:0007669"/>
    <property type="project" value="InterPro"/>
</dbReference>
<dbReference type="HAMAP" id="MF_00276">
    <property type="entry name" value="KdpC"/>
    <property type="match status" value="1"/>
</dbReference>
<dbReference type="InterPro" id="IPR003820">
    <property type="entry name" value="KdpC"/>
</dbReference>
<dbReference type="NCBIfam" id="NF001454">
    <property type="entry name" value="PRK00315.1"/>
    <property type="match status" value="1"/>
</dbReference>
<dbReference type="NCBIfam" id="NF010606">
    <property type="entry name" value="PRK14002.1"/>
    <property type="match status" value="1"/>
</dbReference>
<dbReference type="PANTHER" id="PTHR30042">
    <property type="entry name" value="POTASSIUM-TRANSPORTING ATPASE C CHAIN"/>
    <property type="match status" value="1"/>
</dbReference>
<dbReference type="PANTHER" id="PTHR30042:SF2">
    <property type="entry name" value="POTASSIUM-TRANSPORTING ATPASE KDPC SUBUNIT"/>
    <property type="match status" value="1"/>
</dbReference>
<dbReference type="Pfam" id="PF02669">
    <property type="entry name" value="KdpC"/>
    <property type="match status" value="1"/>
</dbReference>
<dbReference type="PIRSF" id="PIRSF001296">
    <property type="entry name" value="K_ATPase_KdpC"/>
    <property type="match status" value="1"/>
</dbReference>
<accession>A5FIF7</accession>
<reference key="1">
    <citation type="journal article" date="2009" name="Appl. Environ. Microbiol.">
        <title>Novel features of the polysaccharide-digesting gliding bacterium Flavobacterium johnsoniae as revealed by genome sequence analysis.</title>
        <authorList>
            <person name="McBride M.J."/>
            <person name="Xie G."/>
            <person name="Martens E.C."/>
            <person name="Lapidus A."/>
            <person name="Henrissat B."/>
            <person name="Rhodes R.G."/>
            <person name="Goltsman E."/>
            <person name="Wang W."/>
            <person name="Xu J."/>
            <person name="Hunnicutt D.W."/>
            <person name="Staroscik A.M."/>
            <person name="Hoover T.R."/>
            <person name="Cheng Y.Q."/>
            <person name="Stein J.L."/>
        </authorList>
    </citation>
    <scope>NUCLEOTIDE SEQUENCE [LARGE SCALE GENOMIC DNA]</scope>
    <source>
        <strain>ATCC 17061 / DSM 2064 / JCM 8514 / BCRC 14874 / CCUG 350202 / NBRC 14942 / NCIMB 11054 / UW101</strain>
    </source>
</reference>
<gene>
    <name evidence="1" type="primary">kdpC</name>
    <name type="ordered locus">Fjoh_1973</name>
</gene>
<proteinExistence type="inferred from homology"/>
<protein>
    <recommendedName>
        <fullName evidence="1">Potassium-transporting ATPase KdpC subunit</fullName>
    </recommendedName>
    <alternativeName>
        <fullName evidence="1">ATP phosphohydrolase [potassium-transporting] C chain</fullName>
    </alternativeName>
    <alternativeName>
        <fullName evidence="1">Potassium-binding and translocating subunit C</fullName>
    </alternativeName>
    <alternativeName>
        <fullName evidence="1">Potassium-translocating ATPase C chain</fullName>
    </alternativeName>
</protein>
<sequence>MKNLFSLLKLTVFTLILFAVIYPLAIYGIAKLAPNQGKGETISVNGKVVGYQKIGQKFDKSNYFWGRPSAVDYNAAGSAGSNKGPSNADYLALVQKRIDTLLLVHPYLKKSDIPVDMVTASGSGLDPNISPQGALIQVKRIAKERMLDEAKVKSLVESKINTAVVGPETVNVLELNVALDQLK</sequence>
<feature type="chain" id="PRO_1000078795" description="Potassium-transporting ATPase KdpC subunit">
    <location>
        <begin position="1"/>
        <end position="183"/>
    </location>
</feature>
<feature type="transmembrane region" description="Helical" evidence="1">
    <location>
        <begin position="10"/>
        <end position="30"/>
    </location>
</feature>
<keyword id="KW-0067">ATP-binding</keyword>
<keyword id="KW-0997">Cell inner membrane</keyword>
<keyword id="KW-1003">Cell membrane</keyword>
<keyword id="KW-0406">Ion transport</keyword>
<keyword id="KW-0472">Membrane</keyword>
<keyword id="KW-0547">Nucleotide-binding</keyword>
<keyword id="KW-0630">Potassium</keyword>
<keyword id="KW-0633">Potassium transport</keyword>
<keyword id="KW-0812">Transmembrane</keyword>
<keyword id="KW-1133">Transmembrane helix</keyword>
<keyword id="KW-0813">Transport</keyword>
<name>KDPC_FLAJ1</name>
<organism>
    <name type="scientific">Flavobacterium johnsoniae (strain ATCC 17061 / DSM 2064 / JCM 8514 / BCRC 14874 / CCUG 350202 / NBRC 14942 / NCIMB 11054 / UW101)</name>
    <name type="common">Cytophaga johnsonae</name>
    <dbReference type="NCBI Taxonomy" id="376686"/>
    <lineage>
        <taxon>Bacteria</taxon>
        <taxon>Pseudomonadati</taxon>
        <taxon>Bacteroidota</taxon>
        <taxon>Flavobacteriia</taxon>
        <taxon>Flavobacteriales</taxon>
        <taxon>Flavobacteriaceae</taxon>
        <taxon>Flavobacterium</taxon>
    </lineage>
</organism>
<comment type="function">
    <text evidence="1">Part of the high-affinity ATP-driven potassium transport (or Kdp) system, which catalyzes the hydrolysis of ATP coupled with the electrogenic transport of potassium into the cytoplasm. This subunit acts as a catalytic chaperone that increases the ATP-binding affinity of the ATP-hydrolyzing subunit KdpB by the formation of a transient KdpB/KdpC/ATP ternary complex.</text>
</comment>
<comment type="subunit">
    <text evidence="1">The system is composed of three essential subunits: KdpA, KdpB and KdpC.</text>
</comment>
<comment type="subcellular location">
    <subcellularLocation>
        <location evidence="1">Cell inner membrane</location>
        <topology evidence="1">Single-pass membrane protein</topology>
    </subcellularLocation>
</comment>
<comment type="similarity">
    <text evidence="1">Belongs to the KdpC family.</text>
</comment>